<organism>
    <name type="scientific">Marchantia polymorpha</name>
    <name type="common">Common liverwort</name>
    <name type="synonym">Marchantia aquatica</name>
    <dbReference type="NCBI Taxonomy" id="3197"/>
    <lineage>
        <taxon>Eukaryota</taxon>
        <taxon>Viridiplantae</taxon>
        <taxon>Streptophyta</taxon>
        <taxon>Embryophyta</taxon>
        <taxon>Marchantiophyta</taxon>
        <taxon>Marchantiopsida</taxon>
        <taxon>Marchantiidae</taxon>
        <taxon>Marchantiales</taxon>
        <taxon>Marchantiaceae</taxon>
        <taxon>Marchantia</taxon>
    </lineage>
</organism>
<protein>
    <recommendedName>
        <fullName evidence="1">Photosystem II reaction center protein Z</fullName>
        <shortName evidence="1">PSII-Z</shortName>
    </recommendedName>
</protein>
<geneLocation type="chloroplast"/>
<feature type="chain" id="PRO_0000217713" description="Photosystem II reaction center protein Z">
    <location>
        <begin position="1"/>
        <end position="62"/>
    </location>
</feature>
<feature type="transmembrane region" description="Helical" evidence="1">
    <location>
        <begin position="8"/>
        <end position="28"/>
    </location>
</feature>
<feature type="transmembrane region" description="Helical" evidence="1">
    <location>
        <begin position="41"/>
        <end position="61"/>
    </location>
</feature>
<dbReference type="EMBL" id="X04465">
    <property type="protein sequence ID" value="CAA28082.1"/>
    <property type="molecule type" value="Genomic_DNA"/>
</dbReference>
<dbReference type="EMBL" id="X01647">
    <property type="protein sequence ID" value="CAA25803.1"/>
    <property type="status" value="ALT_INIT"/>
    <property type="molecule type" value="Genomic_DNA"/>
</dbReference>
<dbReference type="PIR" id="S01595">
    <property type="entry name" value="A05040"/>
</dbReference>
<dbReference type="RefSeq" id="NP_039296.1">
    <property type="nucleotide sequence ID" value="NC_001319.1"/>
</dbReference>
<dbReference type="SMR" id="P09973"/>
<dbReference type="GeneID" id="2702545"/>
<dbReference type="GO" id="GO:0009535">
    <property type="term" value="C:chloroplast thylakoid membrane"/>
    <property type="evidence" value="ECO:0007669"/>
    <property type="project" value="UniProtKB-SubCell"/>
</dbReference>
<dbReference type="GO" id="GO:0009539">
    <property type="term" value="C:photosystem II reaction center"/>
    <property type="evidence" value="ECO:0007669"/>
    <property type="project" value="InterPro"/>
</dbReference>
<dbReference type="GO" id="GO:0015979">
    <property type="term" value="P:photosynthesis"/>
    <property type="evidence" value="ECO:0007669"/>
    <property type="project" value="UniProtKB-UniRule"/>
</dbReference>
<dbReference type="GO" id="GO:0042549">
    <property type="term" value="P:photosystem II stabilization"/>
    <property type="evidence" value="ECO:0007669"/>
    <property type="project" value="InterPro"/>
</dbReference>
<dbReference type="FunFam" id="1.10.287.740:FF:000001">
    <property type="entry name" value="Photosystem II reaction center protein Z"/>
    <property type="match status" value="1"/>
</dbReference>
<dbReference type="Gene3D" id="1.10.287.740">
    <property type="entry name" value="Photosystem II PsbZ, reaction centre"/>
    <property type="match status" value="1"/>
</dbReference>
<dbReference type="HAMAP" id="MF_00644">
    <property type="entry name" value="PSII_PsbZ"/>
    <property type="match status" value="1"/>
</dbReference>
<dbReference type="InterPro" id="IPR002644">
    <property type="entry name" value="PSII_PsbZ"/>
</dbReference>
<dbReference type="InterPro" id="IPR036512">
    <property type="entry name" value="PSII_PsbZ_sf"/>
</dbReference>
<dbReference type="NCBIfam" id="TIGR03043">
    <property type="entry name" value="PS_II_psbZ"/>
    <property type="match status" value="1"/>
</dbReference>
<dbReference type="PANTHER" id="PTHR34971">
    <property type="entry name" value="PHOTOSYSTEM II REACTION CENTER PROTEIN Z"/>
    <property type="match status" value="1"/>
</dbReference>
<dbReference type="PANTHER" id="PTHR34971:SF2">
    <property type="entry name" value="PHOTOSYSTEM II REACTION CENTER PROTEIN Z"/>
    <property type="match status" value="1"/>
</dbReference>
<dbReference type="Pfam" id="PF01737">
    <property type="entry name" value="Ycf9"/>
    <property type="match status" value="1"/>
</dbReference>
<dbReference type="SUPFAM" id="SSF161055">
    <property type="entry name" value="PsbZ-like"/>
    <property type="match status" value="1"/>
</dbReference>
<proteinExistence type="inferred from homology"/>
<sequence>MTIAFQLAVFALIAISFLLVIGVPVVLASPEGWSSNKNVVFSGASLWIGLVFLVGILNSFIS</sequence>
<name>PSBZ_MARPO</name>
<comment type="function">
    <text evidence="1">May control the interaction of photosystem II (PSII) cores with the light-harvesting antenna, regulates electron flow through the 2 photosystem reaction centers. PSII is a light-driven water plastoquinone oxidoreductase, using light energy to abstract electrons from H(2)O, generating a proton gradient subsequently used for ATP formation.</text>
</comment>
<comment type="subunit">
    <text evidence="1">PSII is composed of 1 copy each of membrane proteins PsbA, PsbB, PsbC, PsbD, PsbE, PsbF, PsbH, PsbI, PsbJ, PsbK, PsbL, PsbM, PsbT, PsbY, PsbZ, Psb30/Ycf12, at least 3 peripheral proteins of the oxygen-evolving complex and a large number of cofactors. It forms dimeric complexes.</text>
</comment>
<comment type="subcellular location">
    <subcellularLocation>
        <location evidence="1">Plastid</location>
        <location evidence="1">Chloroplast thylakoid membrane</location>
        <topology evidence="1">Multi-pass membrane protein</topology>
    </subcellularLocation>
</comment>
<comment type="similarity">
    <text evidence="1">Belongs to the PsbZ family.</text>
</comment>
<comment type="sequence caution" evidence="2">
    <conflict type="erroneous initiation">
        <sequence resource="EMBL-CDS" id="CAA25803"/>
    </conflict>
    <text>Extended N-terminus.</text>
</comment>
<gene>
    <name evidence="1" type="primary">psbZ</name>
    <name type="synonym">ycf9</name>
</gene>
<evidence type="ECO:0000255" key="1">
    <source>
        <dbReference type="HAMAP-Rule" id="MF_00644"/>
    </source>
</evidence>
<evidence type="ECO:0000305" key="2"/>
<keyword id="KW-0150">Chloroplast</keyword>
<keyword id="KW-0472">Membrane</keyword>
<keyword id="KW-0602">Photosynthesis</keyword>
<keyword id="KW-0604">Photosystem II</keyword>
<keyword id="KW-0934">Plastid</keyword>
<keyword id="KW-0674">Reaction center</keyword>
<keyword id="KW-0793">Thylakoid</keyword>
<keyword id="KW-0812">Transmembrane</keyword>
<keyword id="KW-1133">Transmembrane helix</keyword>
<reference key="1">
    <citation type="journal article" date="1984" name="Nucleic Acids Res.">
        <title>Nucleotide sequence of Marchantia polymorpha chloroplast DNA: a region possibly encoding three tRNAs and three proteins including a homologue of E. coli ribosomal protein S14.</title>
        <authorList>
            <person name="Umesono K."/>
            <person name="Inokuchi H."/>
            <person name="Ohyama K."/>
            <person name="Ozeki H."/>
        </authorList>
    </citation>
    <scope>NUCLEOTIDE SEQUENCE [GENOMIC DNA]</scope>
</reference>
<reference key="2">
    <citation type="journal article" date="1986" name="Nature">
        <title>Chloroplast gene organization deduced from complete sequence of liverwort Marchantia polymorpha chloroplast DNA.</title>
        <authorList>
            <person name="Ohyama K."/>
            <person name="Fukuzawa H."/>
            <person name="Kohchi T."/>
            <person name="Shirai H."/>
            <person name="Sano T."/>
            <person name="Sano S."/>
            <person name="Umesono K."/>
            <person name="Shiki Y."/>
            <person name="Takeuchi M."/>
            <person name="Chang Z."/>
            <person name="Aota S."/>
            <person name="Inokuchi H."/>
            <person name="Ozeki H."/>
        </authorList>
    </citation>
    <scope>NUCLEOTIDE SEQUENCE [LARGE SCALE GENOMIC DNA]</scope>
</reference>
<reference key="3">
    <citation type="journal article" date="1988" name="J. Mol. Biol.">
        <title>Structure and organization of Marchantia polymorpha chloroplast genome. II. Gene organization of the large single copy region from rps'12 to atpB.</title>
        <authorList>
            <person name="Umesono K."/>
            <person name="Inokuchi H."/>
            <person name="Shiki Y."/>
            <person name="Takeuchi M."/>
            <person name="Chang Z."/>
            <person name="Fukuzawa H."/>
            <person name="Kohchi T."/>
            <person name="Shirai H."/>
            <person name="Ohyama K."/>
            <person name="Ozeki H."/>
        </authorList>
    </citation>
    <scope>NUCLEOTIDE SEQUENCE [GENOMIC DNA]</scope>
</reference>
<accession>P09973</accession>
<accession>P09361</accession>